<gene>
    <name evidence="1" type="primary">lipB</name>
    <name type="ordered locus">PERMA_1020</name>
</gene>
<comment type="function">
    <text evidence="1">Catalyzes the transfer of endogenously produced octanoic acid from octanoyl-acyl-carrier-protein onto the lipoyl domains of lipoate-dependent enzymes. Lipoyl-ACP can also act as a substrate although octanoyl-ACP is likely to be the physiological substrate.</text>
</comment>
<comment type="catalytic activity">
    <reaction evidence="1">
        <text>octanoyl-[ACP] + L-lysyl-[protein] = N(6)-octanoyl-L-lysyl-[protein] + holo-[ACP] + H(+)</text>
        <dbReference type="Rhea" id="RHEA:17665"/>
        <dbReference type="Rhea" id="RHEA-COMP:9636"/>
        <dbReference type="Rhea" id="RHEA-COMP:9685"/>
        <dbReference type="Rhea" id="RHEA-COMP:9752"/>
        <dbReference type="Rhea" id="RHEA-COMP:9928"/>
        <dbReference type="ChEBI" id="CHEBI:15378"/>
        <dbReference type="ChEBI" id="CHEBI:29969"/>
        <dbReference type="ChEBI" id="CHEBI:64479"/>
        <dbReference type="ChEBI" id="CHEBI:78463"/>
        <dbReference type="ChEBI" id="CHEBI:78809"/>
        <dbReference type="EC" id="2.3.1.181"/>
    </reaction>
</comment>
<comment type="pathway">
    <text evidence="1">Protein modification; protein lipoylation via endogenous pathway; protein N(6)-(lipoyl)lysine from octanoyl-[acyl-carrier-protein]: step 1/2.</text>
</comment>
<comment type="subcellular location">
    <subcellularLocation>
        <location evidence="1">Cytoplasm</location>
    </subcellularLocation>
</comment>
<comment type="miscellaneous">
    <text evidence="1">In the reaction, the free carboxyl group of octanoic acid is attached via an amide linkage to the epsilon-amino group of a specific lysine residue of lipoyl domains of lipoate-dependent enzymes.</text>
</comment>
<comment type="similarity">
    <text evidence="1">Belongs to the LipB family.</text>
</comment>
<feature type="chain" id="PRO_1000201799" description="Octanoyltransferase">
    <location>
        <begin position="1"/>
        <end position="203"/>
    </location>
</feature>
<feature type="domain" description="BPL/LPL catalytic" evidence="2">
    <location>
        <begin position="30"/>
        <end position="203"/>
    </location>
</feature>
<feature type="active site" description="Acyl-thioester intermediate" evidence="1">
    <location>
        <position position="166"/>
    </location>
</feature>
<feature type="binding site" evidence="1">
    <location>
        <begin position="69"/>
        <end position="76"/>
    </location>
    <ligand>
        <name>substrate</name>
    </ligand>
</feature>
<feature type="binding site" evidence="1">
    <location>
        <begin position="135"/>
        <end position="137"/>
    </location>
    <ligand>
        <name>substrate</name>
    </ligand>
</feature>
<feature type="binding site" evidence="1">
    <location>
        <begin position="148"/>
        <end position="150"/>
    </location>
    <ligand>
        <name>substrate</name>
    </ligand>
</feature>
<feature type="site" description="Lowers pKa of active site Cys" evidence="1">
    <location>
        <position position="132"/>
    </location>
</feature>
<accession>C0QQ61</accession>
<organism>
    <name type="scientific">Persephonella marina (strain DSM 14350 / EX-H1)</name>
    <dbReference type="NCBI Taxonomy" id="123214"/>
    <lineage>
        <taxon>Bacteria</taxon>
        <taxon>Pseudomonadati</taxon>
        <taxon>Aquificota</taxon>
        <taxon>Aquificia</taxon>
        <taxon>Aquificales</taxon>
        <taxon>Hydrogenothermaceae</taxon>
        <taxon>Persephonella</taxon>
    </lineage>
</organism>
<evidence type="ECO:0000255" key="1">
    <source>
        <dbReference type="HAMAP-Rule" id="MF_00013"/>
    </source>
</evidence>
<evidence type="ECO:0000255" key="2">
    <source>
        <dbReference type="PROSITE-ProRule" id="PRU01067"/>
    </source>
</evidence>
<protein>
    <recommendedName>
        <fullName evidence="1">Octanoyltransferase</fullName>
        <ecNumber evidence="1">2.3.1.181</ecNumber>
    </recommendedName>
    <alternativeName>
        <fullName evidence="1">Lipoate-protein ligase B</fullName>
    </alternativeName>
    <alternativeName>
        <fullName evidence="1">Lipoyl/octanoyl transferase</fullName>
    </alternativeName>
    <alternativeName>
        <fullName evidence="1">Octanoyl-[acyl-carrier-protein]-protein N-octanoyltransferase</fullName>
    </alternativeName>
</protein>
<proteinExistence type="inferred from homology"/>
<dbReference type="EC" id="2.3.1.181" evidence="1"/>
<dbReference type="EMBL" id="CP001230">
    <property type="protein sequence ID" value="ACO03277.1"/>
    <property type="molecule type" value="Genomic_DNA"/>
</dbReference>
<dbReference type="RefSeq" id="WP_012675516.1">
    <property type="nucleotide sequence ID" value="NC_012440.1"/>
</dbReference>
<dbReference type="SMR" id="C0QQ61"/>
<dbReference type="STRING" id="123214.PERMA_1020"/>
<dbReference type="PaxDb" id="123214-PERMA_1020"/>
<dbReference type="KEGG" id="pmx:PERMA_1020"/>
<dbReference type="eggNOG" id="COG0321">
    <property type="taxonomic scope" value="Bacteria"/>
</dbReference>
<dbReference type="HOGENOM" id="CLU_035168_3_1_0"/>
<dbReference type="OrthoDB" id="9787061at2"/>
<dbReference type="UniPathway" id="UPA00538">
    <property type="reaction ID" value="UER00592"/>
</dbReference>
<dbReference type="Proteomes" id="UP000001366">
    <property type="component" value="Chromosome"/>
</dbReference>
<dbReference type="GO" id="GO:0005737">
    <property type="term" value="C:cytoplasm"/>
    <property type="evidence" value="ECO:0007669"/>
    <property type="project" value="UniProtKB-SubCell"/>
</dbReference>
<dbReference type="GO" id="GO:0033819">
    <property type="term" value="F:lipoyl(octanoyl) transferase activity"/>
    <property type="evidence" value="ECO:0007669"/>
    <property type="project" value="UniProtKB-EC"/>
</dbReference>
<dbReference type="GO" id="GO:0036211">
    <property type="term" value="P:protein modification process"/>
    <property type="evidence" value="ECO:0007669"/>
    <property type="project" value="InterPro"/>
</dbReference>
<dbReference type="CDD" id="cd16444">
    <property type="entry name" value="LipB"/>
    <property type="match status" value="1"/>
</dbReference>
<dbReference type="Gene3D" id="3.30.930.10">
    <property type="entry name" value="Bira Bifunctional Protein, Domain 2"/>
    <property type="match status" value="1"/>
</dbReference>
<dbReference type="HAMAP" id="MF_00013">
    <property type="entry name" value="LipB"/>
    <property type="match status" value="1"/>
</dbReference>
<dbReference type="InterPro" id="IPR045864">
    <property type="entry name" value="aa-tRNA-synth_II/BPL/LPL"/>
</dbReference>
<dbReference type="InterPro" id="IPR004143">
    <property type="entry name" value="BPL_LPL_catalytic"/>
</dbReference>
<dbReference type="InterPro" id="IPR000544">
    <property type="entry name" value="Octanoyltransferase"/>
</dbReference>
<dbReference type="InterPro" id="IPR020605">
    <property type="entry name" value="Octanoyltransferase_CS"/>
</dbReference>
<dbReference type="NCBIfam" id="TIGR00214">
    <property type="entry name" value="lipB"/>
    <property type="match status" value="1"/>
</dbReference>
<dbReference type="NCBIfam" id="NF010925">
    <property type="entry name" value="PRK14345.1"/>
    <property type="match status" value="1"/>
</dbReference>
<dbReference type="PANTHER" id="PTHR10993:SF7">
    <property type="entry name" value="LIPOYLTRANSFERASE 2, MITOCHONDRIAL-RELATED"/>
    <property type="match status" value="1"/>
</dbReference>
<dbReference type="PANTHER" id="PTHR10993">
    <property type="entry name" value="OCTANOYLTRANSFERASE"/>
    <property type="match status" value="1"/>
</dbReference>
<dbReference type="Pfam" id="PF21948">
    <property type="entry name" value="LplA-B_cat"/>
    <property type="match status" value="1"/>
</dbReference>
<dbReference type="PIRSF" id="PIRSF016262">
    <property type="entry name" value="LPLase"/>
    <property type="match status" value="1"/>
</dbReference>
<dbReference type="SUPFAM" id="SSF55681">
    <property type="entry name" value="Class II aaRS and biotin synthetases"/>
    <property type="match status" value="1"/>
</dbReference>
<dbReference type="PROSITE" id="PS51733">
    <property type="entry name" value="BPL_LPL_CATALYTIC"/>
    <property type="match status" value="1"/>
</dbReference>
<dbReference type="PROSITE" id="PS01313">
    <property type="entry name" value="LIPB"/>
    <property type="match status" value="1"/>
</dbReference>
<sequence>MLKIIDLGKTEYQEALEIQNRIFERKLTGEDQDNYFFITEHHPVYTAGKTTKPEHILNTEDIPVYYIDRGGSVTFHGEGQIVVYPVLSLKNRISVKRYVFTLEEIVIKTVKEIGINAYRKDRLRGVFTDKGKIASVGVKVSKGVTKHGISLNVNIEKRYFRRIIPCGIWDIPVCNITDFVEADIDKIKLKLIKHIIKEGRKLV</sequence>
<keyword id="KW-0012">Acyltransferase</keyword>
<keyword id="KW-0963">Cytoplasm</keyword>
<keyword id="KW-1185">Reference proteome</keyword>
<keyword id="KW-0808">Transferase</keyword>
<name>LIPB_PERMH</name>
<reference key="1">
    <citation type="journal article" date="2009" name="J. Bacteriol.">
        <title>Complete and draft genome sequences of six members of the Aquificales.</title>
        <authorList>
            <person name="Reysenbach A.-L."/>
            <person name="Hamamura N."/>
            <person name="Podar M."/>
            <person name="Griffiths E."/>
            <person name="Ferreira S."/>
            <person name="Hochstein R."/>
            <person name="Heidelberg J."/>
            <person name="Johnson J."/>
            <person name="Mead D."/>
            <person name="Pohorille A."/>
            <person name="Sarmiento M."/>
            <person name="Schweighofer K."/>
            <person name="Seshadri R."/>
            <person name="Voytek M.A."/>
        </authorList>
    </citation>
    <scope>NUCLEOTIDE SEQUENCE [LARGE SCALE GENOMIC DNA]</scope>
    <source>
        <strain>DSM 14350 / EX-H1</strain>
    </source>
</reference>